<keyword id="KW-0028">Amino-acid biosynthesis</keyword>
<keyword id="KW-0100">Branched-chain amino acid biosynthesis</keyword>
<keyword id="KW-0963">Cytoplasm</keyword>
<keyword id="KW-0432">Leucine biosynthesis</keyword>
<keyword id="KW-0460">Magnesium</keyword>
<keyword id="KW-0464">Manganese</keyword>
<keyword id="KW-0479">Metal-binding</keyword>
<keyword id="KW-0520">NAD</keyword>
<keyword id="KW-0560">Oxidoreductase</keyword>
<keyword id="KW-1185">Reference proteome</keyword>
<dbReference type="EC" id="1.1.1.85" evidence="1"/>
<dbReference type="EMBL" id="AE017125">
    <property type="protein sequence ID" value="AAP77731.1"/>
    <property type="status" value="ALT_INIT"/>
    <property type="molecule type" value="Genomic_DNA"/>
</dbReference>
<dbReference type="RefSeq" id="WP_041309094.1">
    <property type="nucleotide sequence ID" value="NC_004917.1"/>
</dbReference>
<dbReference type="SMR" id="Q7VH33"/>
<dbReference type="STRING" id="235279.HH_1134"/>
<dbReference type="KEGG" id="hhe:HH_1134"/>
<dbReference type="eggNOG" id="COG0473">
    <property type="taxonomic scope" value="Bacteria"/>
</dbReference>
<dbReference type="HOGENOM" id="CLU_031953_0_3_7"/>
<dbReference type="OrthoDB" id="9806254at2"/>
<dbReference type="UniPathway" id="UPA00048">
    <property type="reaction ID" value="UER00072"/>
</dbReference>
<dbReference type="Proteomes" id="UP000002495">
    <property type="component" value="Chromosome"/>
</dbReference>
<dbReference type="GO" id="GO:0005829">
    <property type="term" value="C:cytosol"/>
    <property type="evidence" value="ECO:0007669"/>
    <property type="project" value="TreeGrafter"/>
</dbReference>
<dbReference type="GO" id="GO:0003862">
    <property type="term" value="F:3-isopropylmalate dehydrogenase activity"/>
    <property type="evidence" value="ECO:0007669"/>
    <property type="project" value="UniProtKB-UniRule"/>
</dbReference>
<dbReference type="GO" id="GO:0000287">
    <property type="term" value="F:magnesium ion binding"/>
    <property type="evidence" value="ECO:0007669"/>
    <property type="project" value="InterPro"/>
</dbReference>
<dbReference type="GO" id="GO:0051287">
    <property type="term" value="F:NAD binding"/>
    <property type="evidence" value="ECO:0007669"/>
    <property type="project" value="InterPro"/>
</dbReference>
<dbReference type="GO" id="GO:0009098">
    <property type="term" value="P:L-leucine biosynthetic process"/>
    <property type="evidence" value="ECO:0007669"/>
    <property type="project" value="UniProtKB-UniRule"/>
</dbReference>
<dbReference type="FunFam" id="3.40.718.10:FF:000028">
    <property type="entry name" value="3-isopropylmalate dehydrogenase"/>
    <property type="match status" value="1"/>
</dbReference>
<dbReference type="Gene3D" id="3.40.718.10">
    <property type="entry name" value="Isopropylmalate Dehydrogenase"/>
    <property type="match status" value="1"/>
</dbReference>
<dbReference type="HAMAP" id="MF_01033">
    <property type="entry name" value="LeuB_type1"/>
    <property type="match status" value="1"/>
</dbReference>
<dbReference type="InterPro" id="IPR019818">
    <property type="entry name" value="IsoCit/isopropylmalate_DH_CS"/>
</dbReference>
<dbReference type="InterPro" id="IPR024084">
    <property type="entry name" value="IsoPropMal-DH-like_dom"/>
</dbReference>
<dbReference type="InterPro" id="IPR004429">
    <property type="entry name" value="Isopropylmalate_DH"/>
</dbReference>
<dbReference type="NCBIfam" id="TIGR00169">
    <property type="entry name" value="leuB"/>
    <property type="match status" value="1"/>
</dbReference>
<dbReference type="PANTHER" id="PTHR42979">
    <property type="entry name" value="3-ISOPROPYLMALATE DEHYDROGENASE"/>
    <property type="match status" value="1"/>
</dbReference>
<dbReference type="PANTHER" id="PTHR42979:SF1">
    <property type="entry name" value="3-ISOPROPYLMALATE DEHYDROGENASE"/>
    <property type="match status" value="1"/>
</dbReference>
<dbReference type="Pfam" id="PF00180">
    <property type="entry name" value="Iso_dh"/>
    <property type="match status" value="1"/>
</dbReference>
<dbReference type="SMART" id="SM01329">
    <property type="entry name" value="Iso_dh"/>
    <property type="match status" value="1"/>
</dbReference>
<dbReference type="SUPFAM" id="SSF53659">
    <property type="entry name" value="Isocitrate/Isopropylmalate dehydrogenase-like"/>
    <property type="match status" value="1"/>
</dbReference>
<dbReference type="PROSITE" id="PS00470">
    <property type="entry name" value="IDH_IMDH"/>
    <property type="match status" value="1"/>
</dbReference>
<gene>
    <name evidence="1" type="primary">leuB</name>
    <name type="ordered locus">HH_1134</name>
</gene>
<feature type="chain" id="PRO_0000083700" description="3-isopropylmalate dehydrogenase">
    <location>
        <begin position="1"/>
        <end position="357"/>
    </location>
</feature>
<feature type="binding site" evidence="1">
    <location>
        <begin position="76"/>
        <end position="89"/>
    </location>
    <ligand>
        <name>NAD(+)</name>
        <dbReference type="ChEBI" id="CHEBI:57540"/>
    </ligand>
</feature>
<feature type="binding site" evidence="1">
    <location>
        <position position="96"/>
    </location>
    <ligand>
        <name>substrate</name>
    </ligand>
</feature>
<feature type="binding site" evidence="1">
    <location>
        <position position="106"/>
    </location>
    <ligand>
        <name>substrate</name>
    </ligand>
</feature>
<feature type="binding site" evidence="1">
    <location>
        <position position="135"/>
    </location>
    <ligand>
        <name>substrate</name>
    </ligand>
</feature>
<feature type="binding site" evidence="1">
    <location>
        <position position="223"/>
    </location>
    <ligand>
        <name>Mg(2+)</name>
        <dbReference type="ChEBI" id="CHEBI:18420"/>
    </ligand>
</feature>
<feature type="binding site" evidence="1">
    <location>
        <position position="223"/>
    </location>
    <ligand>
        <name>substrate</name>
    </ligand>
</feature>
<feature type="binding site" evidence="1">
    <location>
        <position position="247"/>
    </location>
    <ligand>
        <name>Mg(2+)</name>
        <dbReference type="ChEBI" id="CHEBI:18420"/>
    </ligand>
</feature>
<feature type="binding site" evidence="1">
    <location>
        <position position="251"/>
    </location>
    <ligand>
        <name>Mg(2+)</name>
        <dbReference type="ChEBI" id="CHEBI:18420"/>
    </ligand>
</feature>
<feature type="binding site" evidence="1">
    <location>
        <begin position="281"/>
        <end position="293"/>
    </location>
    <ligand>
        <name>NAD(+)</name>
        <dbReference type="ChEBI" id="CHEBI:57540"/>
    </ligand>
</feature>
<feature type="site" description="Important for catalysis" evidence="1">
    <location>
        <position position="142"/>
    </location>
</feature>
<feature type="site" description="Important for catalysis" evidence="1">
    <location>
        <position position="191"/>
    </location>
</feature>
<evidence type="ECO:0000255" key="1">
    <source>
        <dbReference type="HAMAP-Rule" id="MF_01033"/>
    </source>
</evidence>
<evidence type="ECO:0000305" key="2"/>
<reference key="1">
    <citation type="journal article" date="2003" name="Proc. Natl. Acad. Sci. U.S.A.">
        <title>The complete genome sequence of the carcinogenic bacterium Helicobacter hepaticus.</title>
        <authorList>
            <person name="Suerbaum S."/>
            <person name="Josenhans C."/>
            <person name="Sterzenbach T."/>
            <person name="Drescher B."/>
            <person name="Brandt P."/>
            <person name="Bell M."/>
            <person name="Droege M."/>
            <person name="Fartmann B."/>
            <person name="Fischer H.-P."/>
            <person name="Ge Z."/>
            <person name="Hoerster A."/>
            <person name="Holland R."/>
            <person name="Klein K."/>
            <person name="Koenig J."/>
            <person name="Macko L."/>
            <person name="Mendz G.L."/>
            <person name="Nyakatura G."/>
            <person name="Schauer D.B."/>
            <person name="Shen Z."/>
            <person name="Weber J."/>
            <person name="Frosch M."/>
            <person name="Fox J.G."/>
        </authorList>
    </citation>
    <scope>NUCLEOTIDE SEQUENCE [LARGE SCALE GENOMIC DNA]</scope>
    <source>
        <strain>ATCC 51449 / 3B1</strain>
    </source>
</reference>
<proteinExistence type="inferred from homology"/>
<organism>
    <name type="scientific">Helicobacter hepaticus (strain ATCC 51449 / 3B1)</name>
    <dbReference type="NCBI Taxonomy" id="235279"/>
    <lineage>
        <taxon>Bacteria</taxon>
        <taxon>Pseudomonadati</taxon>
        <taxon>Campylobacterota</taxon>
        <taxon>Epsilonproteobacteria</taxon>
        <taxon>Campylobacterales</taxon>
        <taxon>Helicobacteraceae</taxon>
        <taxon>Helicobacter</taxon>
    </lineage>
</organism>
<sequence>MQKRIAVIYGDGIGKEVITQALKILKAVAKKYEHTFIFEEVLAGGAAIDECGECLPMKSLQICKQSDSVLLGAVGGPKWDNEPSHNRPEKALLTLRKELGLFANIRPATLLPQLSKASPLKDEILNRGIDFIIVRELIGGVYFGEHKLEEINGEKVASDAMTYSASQIESIAKVAFNIARNRKKEIVCVDKANVLSSSRLWREVVDKVAQNYKDVHLSYMYVDNAAMQICRAPSQFDVILTENMFGDILSDEASIITGTIGVIPSASLSNGTLGMYEPIHGSAPDIAGQDKANPIGTILSAAMMLELSFGLTKESEVIQKAVQNALDKGYRTGDMMSEGMQLVGCEQMGDVILESVI</sequence>
<protein>
    <recommendedName>
        <fullName evidence="1">3-isopropylmalate dehydrogenase</fullName>
        <ecNumber evidence="1">1.1.1.85</ecNumber>
    </recommendedName>
    <alternativeName>
        <fullName evidence="1">3-IPM-DH</fullName>
    </alternativeName>
    <alternativeName>
        <fullName evidence="1">Beta-IPM dehydrogenase</fullName>
        <shortName evidence="1">IMDH</shortName>
    </alternativeName>
</protein>
<accession>Q7VH33</accession>
<name>LEU3_HELHP</name>
<comment type="function">
    <text evidence="1">Catalyzes the oxidation of 3-carboxy-2-hydroxy-4-methylpentanoate (3-isopropylmalate) to 3-carboxy-4-methyl-2-oxopentanoate. The product decarboxylates to 4-methyl-2 oxopentanoate.</text>
</comment>
<comment type="catalytic activity">
    <reaction evidence="1">
        <text>(2R,3S)-3-isopropylmalate + NAD(+) = 4-methyl-2-oxopentanoate + CO2 + NADH</text>
        <dbReference type="Rhea" id="RHEA:32271"/>
        <dbReference type="ChEBI" id="CHEBI:16526"/>
        <dbReference type="ChEBI" id="CHEBI:17865"/>
        <dbReference type="ChEBI" id="CHEBI:35121"/>
        <dbReference type="ChEBI" id="CHEBI:57540"/>
        <dbReference type="ChEBI" id="CHEBI:57945"/>
        <dbReference type="EC" id="1.1.1.85"/>
    </reaction>
</comment>
<comment type="cofactor">
    <cofactor evidence="1">
        <name>Mg(2+)</name>
        <dbReference type="ChEBI" id="CHEBI:18420"/>
    </cofactor>
    <cofactor evidence="1">
        <name>Mn(2+)</name>
        <dbReference type="ChEBI" id="CHEBI:29035"/>
    </cofactor>
    <text evidence="1">Binds 1 Mg(2+) or Mn(2+) ion per subunit.</text>
</comment>
<comment type="pathway">
    <text evidence="1">Amino-acid biosynthesis; L-leucine biosynthesis; L-leucine from 3-methyl-2-oxobutanoate: step 3/4.</text>
</comment>
<comment type="subunit">
    <text evidence="1">Homodimer.</text>
</comment>
<comment type="subcellular location">
    <subcellularLocation>
        <location evidence="1">Cytoplasm</location>
    </subcellularLocation>
</comment>
<comment type="similarity">
    <text evidence="1">Belongs to the isocitrate and isopropylmalate dehydrogenases family. LeuB type 1 subfamily.</text>
</comment>
<comment type="sequence caution" evidence="2">
    <conflict type="erroneous initiation">
        <sequence resource="EMBL-CDS" id="AAP77731"/>
    </conflict>
</comment>